<name>TX214_APOSC</name>
<reference key="1">
    <citation type="journal article" date="1992" name="Toxicon">
        <title>Identification of insecticidal peptides from venom of the trap-door spider, Aptostichus schlingeri (Ctenizidae).</title>
        <authorList>
            <person name="Skinner W.S."/>
            <person name="Dennis P.A."/>
            <person name="Li J.P."/>
            <person name="Quistad G.B."/>
        </authorList>
    </citation>
    <scope>PROTEIN SEQUENCE</scope>
    <scope>FUNCTION</scope>
    <scope>TOXIC DOSE</scope>
    <scope>SUBCELLULAR LOCATION</scope>
    <scope>BIOASSAY</scope>
    <source>
        <tissue>Venom</tissue>
    </source>
</reference>
<proteinExistence type="evidence at protein level"/>
<evidence type="ECO:0000250" key="1">
    <source>
        <dbReference type="UniProtKB" id="A0A452CSQ9"/>
    </source>
</evidence>
<evidence type="ECO:0000269" key="2">
    <source>
    </source>
</evidence>
<evidence type="ECO:0000305" key="3"/>
<evidence type="ECO:0000305" key="4">
    <source>
    </source>
</evidence>
<dbReference type="PIR" id="D44007">
    <property type="entry name" value="D44007"/>
</dbReference>
<dbReference type="SMR" id="P49269"/>
<dbReference type="ArachnoServer" id="AS000404">
    <property type="toxin name" value="U1-cyrtautoxin-As1b"/>
</dbReference>
<dbReference type="GO" id="GO:0005576">
    <property type="term" value="C:extracellular region"/>
    <property type="evidence" value="ECO:0007669"/>
    <property type="project" value="UniProtKB-SubCell"/>
</dbReference>
<dbReference type="GO" id="GO:0099106">
    <property type="term" value="F:ion channel regulator activity"/>
    <property type="evidence" value="ECO:0007669"/>
    <property type="project" value="UniProtKB-KW"/>
</dbReference>
<dbReference type="GO" id="GO:0090729">
    <property type="term" value="F:toxin activity"/>
    <property type="evidence" value="ECO:0007669"/>
    <property type="project" value="UniProtKB-KW"/>
</dbReference>
<dbReference type="InterPro" id="IPR035311">
    <property type="entry name" value="Cys_Knot_tox"/>
</dbReference>
<dbReference type="Pfam" id="PF17486">
    <property type="entry name" value="Cys_Knot_tox"/>
    <property type="match status" value="1"/>
</dbReference>
<feature type="chain" id="PRO_0000087664" description="U1-cyrtautoxin-As1b">
    <location>
        <begin position="1"/>
        <end position="76"/>
    </location>
</feature>
<feature type="disulfide bond" evidence="1">
    <location>
        <begin position="23"/>
        <end position="37"/>
    </location>
</feature>
<feature type="disulfide bond" evidence="1">
    <location>
        <begin position="30"/>
        <end position="51"/>
    </location>
</feature>
<feature type="disulfide bond" evidence="1">
    <location>
        <begin position="36"/>
        <end position="66"/>
    </location>
</feature>
<feature type="disulfide bond" evidence="1">
    <location>
        <begin position="69"/>
        <end position="76"/>
    </location>
</feature>
<sequence>EIPQNLGSGIPHDRIKLPNGQWCKTPGDLCSSSSECCKAKHSNSVTYASFCSREWSGQQGLFINQCRTCNVESSMC</sequence>
<comment type="function">
    <text evidence="2">Neurotoxin with probable ion channel impairing activity. Is both paralytic and lethal, when injected into lepidopteran larvae.</text>
</comment>
<comment type="subcellular location">
    <subcellularLocation>
        <location evidence="2">Secreted</location>
    </subcellularLocation>
</comment>
<comment type="tissue specificity">
    <text evidence="4">Expressed by the venom gland.</text>
</comment>
<comment type="domain">
    <text evidence="1">The presence of a 'disulfide through disulfide knot' structurally defines this protein as a knottin.</text>
</comment>
<comment type="toxic dose">
    <text evidence="2">LD(50) is 0.20 mg/kg by subcutaneous injection.</text>
</comment>
<comment type="similarity">
    <text evidence="3">Belongs to the neurotoxin 21 family.</text>
</comment>
<keyword id="KW-0903">Direct protein sequencing</keyword>
<keyword id="KW-1015">Disulfide bond</keyword>
<keyword id="KW-0872">Ion channel impairing toxin</keyword>
<keyword id="KW-0960">Knottin</keyword>
<keyword id="KW-0528">Neurotoxin</keyword>
<keyword id="KW-0964">Secreted</keyword>
<keyword id="KW-0800">Toxin</keyword>
<protein>
    <recommendedName>
        <fullName>U1-cyrtautoxin-As1b</fullName>
        <shortName>U1-CUTX-As1b</shortName>
    </recommendedName>
    <alternativeName>
        <fullName>Aptotoxin IV</fullName>
    </alternativeName>
    <alternativeName>
        <fullName>Aptotoxin-4</fullName>
    </alternativeName>
    <alternativeName>
        <fullName>Paralytic peptide IV</fullName>
        <shortName>PP IV</shortName>
    </alternativeName>
</protein>
<organism>
    <name type="scientific">Apomastus schlingeri</name>
    <name type="common">Trap-door spider</name>
    <name type="synonym">Aptostichus schlingeri</name>
    <dbReference type="NCBI Taxonomy" id="12944"/>
    <lineage>
        <taxon>Eukaryota</taxon>
        <taxon>Metazoa</taxon>
        <taxon>Ecdysozoa</taxon>
        <taxon>Arthropoda</taxon>
        <taxon>Chelicerata</taxon>
        <taxon>Arachnida</taxon>
        <taxon>Araneae</taxon>
        <taxon>Mygalomorphae</taxon>
        <taxon>Euctenizidae</taxon>
        <taxon>Apomastus</taxon>
    </lineage>
</organism>
<accession>P49269</accession>